<accession>B7NLC7</accession>
<name>TORD_ECO7I</name>
<protein>
    <recommendedName>
        <fullName evidence="1">Chaperone protein TorD</fullName>
    </recommendedName>
</protein>
<proteinExistence type="inferred from homology"/>
<feature type="chain" id="PRO_1000137505" description="Chaperone protein TorD">
    <location>
        <begin position="1"/>
        <end position="199"/>
    </location>
</feature>
<dbReference type="EMBL" id="CU928164">
    <property type="protein sequence ID" value="CAR18283.1"/>
    <property type="molecule type" value="Genomic_DNA"/>
</dbReference>
<dbReference type="RefSeq" id="WP_000209922.1">
    <property type="nucleotide sequence ID" value="NC_011750.1"/>
</dbReference>
<dbReference type="RefSeq" id="YP_002408119.1">
    <property type="nucleotide sequence ID" value="NC_011750.1"/>
</dbReference>
<dbReference type="SMR" id="B7NLC7"/>
<dbReference type="STRING" id="585057.ECIAI39_2156"/>
<dbReference type="KEGG" id="ect:ECIAI39_2156"/>
<dbReference type="PATRIC" id="fig|585057.6.peg.2245"/>
<dbReference type="HOGENOM" id="CLU_077650_4_0_6"/>
<dbReference type="Proteomes" id="UP000000749">
    <property type="component" value="Chromosome"/>
</dbReference>
<dbReference type="GO" id="GO:0005737">
    <property type="term" value="C:cytoplasm"/>
    <property type="evidence" value="ECO:0007669"/>
    <property type="project" value="UniProtKB-SubCell"/>
</dbReference>
<dbReference type="GO" id="GO:0051259">
    <property type="term" value="P:protein complex oligomerization"/>
    <property type="evidence" value="ECO:0007669"/>
    <property type="project" value="InterPro"/>
</dbReference>
<dbReference type="GO" id="GO:0006457">
    <property type="term" value="P:protein folding"/>
    <property type="evidence" value="ECO:0007669"/>
    <property type="project" value="UniProtKB-UniRule"/>
</dbReference>
<dbReference type="FunFam" id="1.20.120.1820:FF:000001">
    <property type="entry name" value="Chaperone protein TorD"/>
    <property type="match status" value="1"/>
</dbReference>
<dbReference type="FunFam" id="1.20.1280.20:FF:000003">
    <property type="entry name" value="Chaperone protein TorD"/>
    <property type="match status" value="1"/>
</dbReference>
<dbReference type="Gene3D" id="1.20.120.1820">
    <property type="match status" value="1"/>
</dbReference>
<dbReference type="Gene3D" id="1.20.1280.20">
    <property type="entry name" value="HscB, C-terminal domain"/>
    <property type="match status" value="1"/>
</dbReference>
<dbReference type="HAMAP" id="MF_01150">
    <property type="entry name" value="TorD"/>
    <property type="match status" value="1"/>
</dbReference>
<dbReference type="InterPro" id="IPR023069">
    <property type="entry name" value="Chaperone_TorD"/>
</dbReference>
<dbReference type="InterPro" id="IPR020945">
    <property type="entry name" value="DMSO/NO3_reduct_chaperone"/>
</dbReference>
<dbReference type="InterPro" id="IPR036386">
    <property type="entry name" value="HscB_C_sf"/>
</dbReference>
<dbReference type="InterPro" id="IPR036411">
    <property type="entry name" value="TorD-like_sf"/>
</dbReference>
<dbReference type="InterPro" id="IPR050289">
    <property type="entry name" value="TorD/DmsD_chaperones"/>
</dbReference>
<dbReference type="NCBIfam" id="NF003442">
    <property type="entry name" value="PRK04976.1"/>
    <property type="match status" value="1"/>
</dbReference>
<dbReference type="PANTHER" id="PTHR34227:SF11">
    <property type="entry name" value="CHAPERONE PROTEIN TORD"/>
    <property type="match status" value="1"/>
</dbReference>
<dbReference type="PANTHER" id="PTHR34227">
    <property type="entry name" value="CHAPERONE PROTEIN YCDY"/>
    <property type="match status" value="1"/>
</dbReference>
<dbReference type="Pfam" id="PF02613">
    <property type="entry name" value="Nitrate_red_del"/>
    <property type="match status" value="1"/>
</dbReference>
<dbReference type="SUPFAM" id="SSF89155">
    <property type="entry name" value="TorD-like"/>
    <property type="match status" value="1"/>
</dbReference>
<gene>
    <name evidence="1" type="primary">torD</name>
    <name type="ordered locus">ECIAI39_2156</name>
</gene>
<reference key="1">
    <citation type="journal article" date="2009" name="PLoS Genet.">
        <title>Organised genome dynamics in the Escherichia coli species results in highly diverse adaptive paths.</title>
        <authorList>
            <person name="Touchon M."/>
            <person name="Hoede C."/>
            <person name="Tenaillon O."/>
            <person name="Barbe V."/>
            <person name="Baeriswyl S."/>
            <person name="Bidet P."/>
            <person name="Bingen E."/>
            <person name="Bonacorsi S."/>
            <person name="Bouchier C."/>
            <person name="Bouvet O."/>
            <person name="Calteau A."/>
            <person name="Chiapello H."/>
            <person name="Clermont O."/>
            <person name="Cruveiller S."/>
            <person name="Danchin A."/>
            <person name="Diard M."/>
            <person name="Dossat C."/>
            <person name="Karoui M.E."/>
            <person name="Frapy E."/>
            <person name="Garry L."/>
            <person name="Ghigo J.M."/>
            <person name="Gilles A.M."/>
            <person name="Johnson J."/>
            <person name="Le Bouguenec C."/>
            <person name="Lescat M."/>
            <person name="Mangenot S."/>
            <person name="Martinez-Jehanne V."/>
            <person name="Matic I."/>
            <person name="Nassif X."/>
            <person name="Oztas S."/>
            <person name="Petit M.A."/>
            <person name="Pichon C."/>
            <person name="Rouy Z."/>
            <person name="Ruf C.S."/>
            <person name="Schneider D."/>
            <person name="Tourret J."/>
            <person name="Vacherie B."/>
            <person name="Vallenet D."/>
            <person name="Medigue C."/>
            <person name="Rocha E.P.C."/>
            <person name="Denamur E."/>
        </authorList>
    </citation>
    <scope>NUCLEOTIDE SEQUENCE [LARGE SCALE GENOMIC DNA]</scope>
    <source>
        <strain>IAI39 / ExPEC</strain>
    </source>
</reference>
<comment type="function">
    <text evidence="1">Involved in the biogenesis of TorA. Acts on TorA before the insertion of the molybdenum cofactor and, as a result, probably favors a conformation of the apoenzyme that is competent for acquiring the cofactor.</text>
</comment>
<comment type="subcellular location">
    <subcellularLocation>
        <location evidence="1">Cytoplasm</location>
    </subcellularLocation>
</comment>
<comment type="similarity">
    <text evidence="1">Belongs to the TorD/DmsD family. TorD subfamily.</text>
</comment>
<keyword id="KW-0143">Chaperone</keyword>
<keyword id="KW-0963">Cytoplasm</keyword>
<organism>
    <name type="scientific">Escherichia coli O7:K1 (strain IAI39 / ExPEC)</name>
    <dbReference type="NCBI Taxonomy" id="585057"/>
    <lineage>
        <taxon>Bacteria</taxon>
        <taxon>Pseudomonadati</taxon>
        <taxon>Pseudomonadota</taxon>
        <taxon>Gammaproteobacteria</taxon>
        <taxon>Enterobacterales</taxon>
        <taxon>Enterobacteriaceae</taxon>
        <taxon>Escherichia</taxon>
    </lineage>
</organism>
<evidence type="ECO:0000255" key="1">
    <source>
        <dbReference type="HAMAP-Rule" id="MF_01150"/>
    </source>
</evidence>
<sequence>MTTLTAQQIACVYAWLAQLFSRELDDEQLTQIASAQMAEWFSLMKSEPPLTAAVNELENRIAALTVRDDARLELAADFCGLFLMTDKQAALPYASAYKQDEQEIKRLLVEAGMVTSGNFNEPADHLAIYLELLSHLHFSLGEGSVPARRIDSLRQKTLTALWEWLPEFAARCRQYDSFGFYAALSQLLLVLVECDHQNR</sequence>